<organism>
    <name type="scientific">Mus musculus</name>
    <name type="common">Mouse</name>
    <dbReference type="NCBI Taxonomy" id="10090"/>
    <lineage>
        <taxon>Eukaryota</taxon>
        <taxon>Metazoa</taxon>
        <taxon>Chordata</taxon>
        <taxon>Craniata</taxon>
        <taxon>Vertebrata</taxon>
        <taxon>Euteleostomi</taxon>
        <taxon>Mammalia</taxon>
        <taxon>Eutheria</taxon>
        <taxon>Euarchontoglires</taxon>
        <taxon>Glires</taxon>
        <taxon>Rodentia</taxon>
        <taxon>Myomorpha</taxon>
        <taxon>Muroidea</taxon>
        <taxon>Muridae</taxon>
        <taxon>Murinae</taxon>
        <taxon>Mus</taxon>
        <taxon>Mus</taxon>
    </lineage>
</organism>
<sequence>MADYWKSQPKKFCDYCKCWIADNRPSVEFHERGKNHKENVARRISEIKQKSLDKAKEEEKASKEFAAMEAAALKAYQEDLKRLGLPLPSDISEPTVSPVISTVQPTPTSNQQKEKKKKKKKKEASKGGWVEGVTADGHCYYYDLITGASQWEKPEGFQGNLKKTAAKAVWVEGLSEDGYTYYYNTETGESKWEKPEDFIPHGGDVLSSKDSGKLPDTLEDAKSSDSHSDSEGEQKKAGEASTETKKLIIKFKEKNKSTEKRIGPEIQKEKSTPKQNPSNTNEEKPKTLKKSTNPYGEWQEIKQEAESQEEVDLELPSTEGECLSTSEAGVGEIKVVFKEKTVSSLGVAADGVAPVFKKRRLENGKSRNLRQRGDDE</sequence>
<reference key="1">
    <citation type="journal article" date="1998" name="Proc. Natl. Acad. Sci. U.S.A.">
        <title>WW domain-mediated interactions reveal a spliceosome-associated protein that binds a third class of proline-rich motif: the proline glycine and methionine-rich motif.</title>
        <authorList>
            <person name="Bedford M.T."/>
            <person name="Reed R."/>
            <person name="Leder P."/>
        </authorList>
    </citation>
    <scope>NUCLEOTIDE SEQUENCE [MRNA]</scope>
    <scope>FUNCTION</scope>
    <scope>SUBCELLULAR LOCATION</scope>
    <scope>INTERACTION WITH SNRPB; SNRPC; SF1 AND U2</scope>
</reference>
<reference key="2">
    <citation type="journal article" date="2005" name="Science">
        <title>The transcriptional landscape of the mammalian genome.</title>
        <authorList>
            <person name="Carninci P."/>
            <person name="Kasukawa T."/>
            <person name="Katayama S."/>
            <person name="Gough J."/>
            <person name="Frith M.C."/>
            <person name="Maeda N."/>
            <person name="Oyama R."/>
            <person name="Ravasi T."/>
            <person name="Lenhard B."/>
            <person name="Wells C."/>
            <person name="Kodzius R."/>
            <person name="Shimokawa K."/>
            <person name="Bajic V.B."/>
            <person name="Brenner S.E."/>
            <person name="Batalov S."/>
            <person name="Forrest A.R."/>
            <person name="Zavolan M."/>
            <person name="Davis M.J."/>
            <person name="Wilming L.G."/>
            <person name="Aidinis V."/>
            <person name="Allen J.E."/>
            <person name="Ambesi-Impiombato A."/>
            <person name="Apweiler R."/>
            <person name="Aturaliya R.N."/>
            <person name="Bailey T.L."/>
            <person name="Bansal M."/>
            <person name="Baxter L."/>
            <person name="Beisel K.W."/>
            <person name="Bersano T."/>
            <person name="Bono H."/>
            <person name="Chalk A.M."/>
            <person name="Chiu K.P."/>
            <person name="Choudhary V."/>
            <person name="Christoffels A."/>
            <person name="Clutterbuck D.R."/>
            <person name="Crowe M.L."/>
            <person name="Dalla E."/>
            <person name="Dalrymple B.P."/>
            <person name="de Bono B."/>
            <person name="Della Gatta G."/>
            <person name="di Bernardo D."/>
            <person name="Down T."/>
            <person name="Engstrom P."/>
            <person name="Fagiolini M."/>
            <person name="Faulkner G."/>
            <person name="Fletcher C.F."/>
            <person name="Fukushima T."/>
            <person name="Furuno M."/>
            <person name="Futaki S."/>
            <person name="Gariboldi M."/>
            <person name="Georgii-Hemming P."/>
            <person name="Gingeras T.R."/>
            <person name="Gojobori T."/>
            <person name="Green R.E."/>
            <person name="Gustincich S."/>
            <person name="Harbers M."/>
            <person name="Hayashi Y."/>
            <person name="Hensch T.K."/>
            <person name="Hirokawa N."/>
            <person name="Hill D."/>
            <person name="Huminiecki L."/>
            <person name="Iacono M."/>
            <person name="Ikeo K."/>
            <person name="Iwama A."/>
            <person name="Ishikawa T."/>
            <person name="Jakt M."/>
            <person name="Kanapin A."/>
            <person name="Katoh M."/>
            <person name="Kawasawa Y."/>
            <person name="Kelso J."/>
            <person name="Kitamura H."/>
            <person name="Kitano H."/>
            <person name="Kollias G."/>
            <person name="Krishnan S.P."/>
            <person name="Kruger A."/>
            <person name="Kummerfeld S.K."/>
            <person name="Kurochkin I.V."/>
            <person name="Lareau L.F."/>
            <person name="Lazarevic D."/>
            <person name="Lipovich L."/>
            <person name="Liu J."/>
            <person name="Liuni S."/>
            <person name="McWilliam S."/>
            <person name="Madan Babu M."/>
            <person name="Madera M."/>
            <person name="Marchionni L."/>
            <person name="Matsuda H."/>
            <person name="Matsuzawa S."/>
            <person name="Miki H."/>
            <person name="Mignone F."/>
            <person name="Miyake S."/>
            <person name="Morris K."/>
            <person name="Mottagui-Tabar S."/>
            <person name="Mulder N."/>
            <person name="Nakano N."/>
            <person name="Nakauchi H."/>
            <person name="Ng P."/>
            <person name="Nilsson R."/>
            <person name="Nishiguchi S."/>
            <person name="Nishikawa S."/>
            <person name="Nori F."/>
            <person name="Ohara O."/>
            <person name="Okazaki Y."/>
            <person name="Orlando V."/>
            <person name="Pang K.C."/>
            <person name="Pavan W.J."/>
            <person name="Pavesi G."/>
            <person name="Pesole G."/>
            <person name="Petrovsky N."/>
            <person name="Piazza S."/>
            <person name="Reed J."/>
            <person name="Reid J.F."/>
            <person name="Ring B.Z."/>
            <person name="Ringwald M."/>
            <person name="Rost B."/>
            <person name="Ruan Y."/>
            <person name="Salzberg S.L."/>
            <person name="Sandelin A."/>
            <person name="Schneider C."/>
            <person name="Schoenbach C."/>
            <person name="Sekiguchi K."/>
            <person name="Semple C.A."/>
            <person name="Seno S."/>
            <person name="Sessa L."/>
            <person name="Sheng Y."/>
            <person name="Shibata Y."/>
            <person name="Shimada H."/>
            <person name="Shimada K."/>
            <person name="Silva D."/>
            <person name="Sinclair B."/>
            <person name="Sperling S."/>
            <person name="Stupka E."/>
            <person name="Sugiura K."/>
            <person name="Sultana R."/>
            <person name="Takenaka Y."/>
            <person name="Taki K."/>
            <person name="Tammoja K."/>
            <person name="Tan S.L."/>
            <person name="Tang S."/>
            <person name="Taylor M.S."/>
            <person name="Tegner J."/>
            <person name="Teichmann S.A."/>
            <person name="Ueda H.R."/>
            <person name="van Nimwegen E."/>
            <person name="Verardo R."/>
            <person name="Wei C.L."/>
            <person name="Yagi K."/>
            <person name="Yamanishi H."/>
            <person name="Zabarovsky E."/>
            <person name="Zhu S."/>
            <person name="Zimmer A."/>
            <person name="Hide W."/>
            <person name="Bult C."/>
            <person name="Grimmond S.M."/>
            <person name="Teasdale R.D."/>
            <person name="Liu E.T."/>
            <person name="Brusic V."/>
            <person name="Quackenbush J."/>
            <person name="Wahlestedt C."/>
            <person name="Mattick J.S."/>
            <person name="Hume D.A."/>
            <person name="Kai C."/>
            <person name="Sasaki D."/>
            <person name="Tomaru Y."/>
            <person name="Fukuda S."/>
            <person name="Kanamori-Katayama M."/>
            <person name="Suzuki M."/>
            <person name="Aoki J."/>
            <person name="Arakawa T."/>
            <person name="Iida J."/>
            <person name="Imamura K."/>
            <person name="Itoh M."/>
            <person name="Kato T."/>
            <person name="Kawaji H."/>
            <person name="Kawagashira N."/>
            <person name="Kawashima T."/>
            <person name="Kojima M."/>
            <person name="Kondo S."/>
            <person name="Konno H."/>
            <person name="Nakano K."/>
            <person name="Ninomiya N."/>
            <person name="Nishio T."/>
            <person name="Okada M."/>
            <person name="Plessy C."/>
            <person name="Shibata K."/>
            <person name="Shiraki T."/>
            <person name="Suzuki S."/>
            <person name="Tagami M."/>
            <person name="Waki K."/>
            <person name="Watahiki A."/>
            <person name="Okamura-Oho Y."/>
            <person name="Suzuki H."/>
            <person name="Kawai J."/>
            <person name="Hayashizaki Y."/>
        </authorList>
    </citation>
    <scope>NUCLEOTIDE SEQUENCE [LARGE SCALE MRNA]</scope>
    <source>
        <strain>C57BL/6J</strain>
        <tissue>Embryo</tissue>
        <tissue>Wolffian duct</tissue>
    </source>
</reference>
<reference key="3">
    <citation type="submission" date="2005-09" db="EMBL/GenBank/DDBJ databases">
        <authorList>
            <person name="Mural R.J."/>
            <person name="Adams M.D."/>
            <person name="Myers E.W."/>
            <person name="Smith H.O."/>
            <person name="Venter J.C."/>
        </authorList>
    </citation>
    <scope>NUCLEOTIDE SEQUENCE [LARGE SCALE GENOMIC DNA]</scope>
</reference>
<reference key="4">
    <citation type="journal article" date="2004" name="Genome Res.">
        <title>The status, quality, and expansion of the NIH full-length cDNA project: the Mammalian Gene Collection (MGC).</title>
        <authorList>
            <consortium name="The MGC Project Team"/>
        </authorList>
    </citation>
    <scope>NUCLEOTIDE SEQUENCE [LARGE SCALE MRNA]</scope>
    <source>
        <strain>C57BL/6J</strain>
        <tissue>Mammary gland</tissue>
    </source>
</reference>
<reference key="5">
    <citation type="journal article" date="2000" name="J. Biol. Chem.">
        <title>Arginine methylation inhibits the binding of proline-rich ligands to Src homology 3, but not WW, domains.</title>
        <authorList>
            <person name="Bedford M.T."/>
            <person name="Frankel A."/>
            <person name="Yaffe M.B."/>
            <person name="Clarke S."/>
            <person name="Leder P."/>
            <person name="Richard S."/>
        </authorList>
    </citation>
    <scope>INTERACTION WITH KHDRBS1</scope>
</reference>
<reference key="6">
    <citation type="journal article" date="2010" name="Cell">
        <title>A tissue-specific atlas of mouse protein phosphorylation and expression.</title>
        <authorList>
            <person name="Huttlin E.L."/>
            <person name="Jedrychowski M.P."/>
            <person name="Elias J.E."/>
            <person name="Goswami T."/>
            <person name="Rad R."/>
            <person name="Beausoleil S.A."/>
            <person name="Villen J."/>
            <person name="Haas W."/>
            <person name="Sowa M.E."/>
            <person name="Gygi S.P."/>
        </authorList>
    </citation>
    <scope>IDENTIFICATION BY MASS SPECTROMETRY [LARGE SCALE ANALYSIS]</scope>
    <source>
        <tissue>Testis</tissue>
    </source>
</reference>
<gene>
    <name type="primary">Wbp4</name>
    <name type="synonym">Fbp21</name>
    <name type="synonym">Fnbp21</name>
</gene>
<evidence type="ECO:0000250" key="1">
    <source>
        <dbReference type="UniProtKB" id="O75554"/>
    </source>
</evidence>
<evidence type="ECO:0000255" key="2">
    <source>
        <dbReference type="PROSITE-ProRule" id="PRU00130"/>
    </source>
</evidence>
<evidence type="ECO:0000255" key="3">
    <source>
        <dbReference type="PROSITE-ProRule" id="PRU00224"/>
    </source>
</evidence>
<evidence type="ECO:0000256" key="4">
    <source>
        <dbReference type="SAM" id="MobiDB-lite"/>
    </source>
</evidence>
<evidence type="ECO:0000269" key="5">
    <source>
    </source>
</evidence>
<evidence type="ECO:0000269" key="6">
    <source>
    </source>
</evidence>
<evidence type="ECO:0000305" key="7"/>
<comment type="function">
    <text evidence="6">Involved in pre-mRNA splicing as a component of the spliceosome. May play a role in cross-intron bridging of U1 and U2 snRNPs in the mammalian A complex.</text>
</comment>
<comment type="subunit">
    <text evidence="1 5 6">Component of the spliceosome B complex (PubMed:9724750). Associated with U2 snRNPs. Binds splicing factors SNRPB, SNRPC and SF1 (PubMed:9724750). Interacts via the WW domains with the Pro-rich domains of KHDRBS1/SAM68 (PubMed:10748127). Interacts via the WW domains with the Pro-rich domains of WBP11 (By similarity). Interacts with SNRNP200 (By similarity).</text>
</comment>
<comment type="subcellular location">
    <subcellularLocation>
        <location evidence="1">Nucleus</location>
    </subcellularLocation>
    <subcellularLocation>
        <location evidence="2 6">Nucleus speckle</location>
    </subcellularLocation>
</comment>
<comment type="domain">
    <text>The WW domain recognizes the proline, glycine and methionine-rich (PGM) motif present in the splicing factors, as well as the Arg/Gly-rich-flanked Pro-rich domains found in several WW domain-binding proteins.</text>
</comment>
<name>WBP4_MOUSE</name>
<protein>
    <recommendedName>
        <fullName>WW domain-binding protein 4</fullName>
        <shortName>WBP-4</shortName>
    </recommendedName>
    <alternativeName>
        <fullName>Formin-binding protein 21</fullName>
    </alternativeName>
    <alternativeName>
        <fullName>WW domain-containing-binding protein 4</fullName>
    </alternativeName>
</protein>
<accession>Q61048</accession>
<accession>Q3TUU8</accession>
<accession>Q8K1Z9</accession>
<accession>Q9CS45</accession>
<dbReference type="EMBL" id="AF071184">
    <property type="protein sequence ID" value="AAC34810.1"/>
    <property type="molecule type" value="mRNA"/>
</dbReference>
<dbReference type="EMBL" id="AK019160">
    <property type="protein sequence ID" value="BAB31575.3"/>
    <property type="molecule type" value="mRNA"/>
</dbReference>
<dbReference type="EMBL" id="AK135215">
    <property type="protein sequence ID" value="BAE22462.1"/>
    <property type="molecule type" value="mRNA"/>
</dbReference>
<dbReference type="EMBL" id="AK160559">
    <property type="protein sequence ID" value="BAE35873.1"/>
    <property type="molecule type" value="mRNA"/>
</dbReference>
<dbReference type="EMBL" id="AK162009">
    <property type="protein sequence ID" value="BAE36679.1"/>
    <property type="molecule type" value="mRNA"/>
</dbReference>
<dbReference type="EMBL" id="CH466535">
    <property type="protein sequence ID" value="EDL35764.1"/>
    <property type="molecule type" value="Genomic_DNA"/>
</dbReference>
<dbReference type="EMBL" id="BC034851">
    <property type="protein sequence ID" value="AAH34851.1"/>
    <property type="molecule type" value="mRNA"/>
</dbReference>
<dbReference type="CCDS" id="CCDS27300.1"/>
<dbReference type="PIR" id="S64714">
    <property type="entry name" value="S64714"/>
</dbReference>
<dbReference type="RefSeq" id="NP_061235.2">
    <property type="nucleotide sequence ID" value="NM_018765.3"/>
</dbReference>
<dbReference type="SMR" id="Q61048"/>
<dbReference type="BioGRID" id="204548">
    <property type="interactions" value="4"/>
</dbReference>
<dbReference type="ELM" id="Q61048"/>
<dbReference type="FunCoup" id="Q61048">
    <property type="interactions" value="4109"/>
</dbReference>
<dbReference type="IntAct" id="Q61048">
    <property type="interactions" value="1"/>
</dbReference>
<dbReference type="MINT" id="Q61048"/>
<dbReference type="STRING" id="10090.ENSMUSP00000022601"/>
<dbReference type="GlyGen" id="Q61048">
    <property type="glycosylation" value="1 site"/>
</dbReference>
<dbReference type="iPTMnet" id="Q61048"/>
<dbReference type="PhosphoSitePlus" id="Q61048"/>
<dbReference type="PaxDb" id="10090-ENSMUSP00000022601"/>
<dbReference type="ProteomicsDB" id="297634"/>
<dbReference type="Pumba" id="Q61048"/>
<dbReference type="Antibodypedia" id="42181">
    <property type="antibodies" value="53 antibodies from 13 providers"/>
</dbReference>
<dbReference type="DNASU" id="22380"/>
<dbReference type="Ensembl" id="ENSMUST00000022601.7">
    <property type="protein sequence ID" value="ENSMUSP00000022601.6"/>
    <property type="gene ID" value="ENSMUSG00000022023.7"/>
</dbReference>
<dbReference type="GeneID" id="22380"/>
<dbReference type="KEGG" id="mmu:22380"/>
<dbReference type="UCSC" id="uc007uta.1">
    <property type="organism name" value="mouse"/>
</dbReference>
<dbReference type="AGR" id="MGI:109568"/>
<dbReference type="CTD" id="11193"/>
<dbReference type="MGI" id="MGI:109568">
    <property type="gene designation" value="Wbp4"/>
</dbReference>
<dbReference type="VEuPathDB" id="HostDB:ENSMUSG00000022023"/>
<dbReference type="eggNOG" id="KOG0150">
    <property type="taxonomic scope" value="Eukaryota"/>
</dbReference>
<dbReference type="GeneTree" id="ENSGT00390000013956"/>
<dbReference type="HOGENOM" id="CLU_050927_1_0_1"/>
<dbReference type="InParanoid" id="Q61048"/>
<dbReference type="OMA" id="FDNSTRW"/>
<dbReference type="OrthoDB" id="191651at2759"/>
<dbReference type="PhylomeDB" id="Q61048"/>
<dbReference type="TreeFam" id="TF316671"/>
<dbReference type="Reactome" id="R-MMU-72163">
    <property type="pathway name" value="mRNA Splicing - Major Pathway"/>
</dbReference>
<dbReference type="BioGRID-ORCS" id="22380">
    <property type="hits" value="12 hits in 81 CRISPR screens"/>
</dbReference>
<dbReference type="ChiTaRS" id="Wbp4">
    <property type="organism name" value="mouse"/>
</dbReference>
<dbReference type="PRO" id="PR:Q61048"/>
<dbReference type="Proteomes" id="UP000000589">
    <property type="component" value="Chromosome 14"/>
</dbReference>
<dbReference type="RNAct" id="Q61048">
    <property type="molecule type" value="protein"/>
</dbReference>
<dbReference type="Bgee" id="ENSMUSG00000022023">
    <property type="expression patterns" value="Expressed in spermatocyte and 272 other cell types or tissues"/>
</dbReference>
<dbReference type="ExpressionAtlas" id="Q61048">
    <property type="expression patterns" value="baseline and differential"/>
</dbReference>
<dbReference type="GO" id="GO:0016607">
    <property type="term" value="C:nuclear speck"/>
    <property type="evidence" value="ECO:0000250"/>
    <property type="project" value="UniProtKB"/>
</dbReference>
<dbReference type="GO" id="GO:0005681">
    <property type="term" value="C:spliceosomal complex"/>
    <property type="evidence" value="ECO:0000314"/>
    <property type="project" value="MGI"/>
</dbReference>
<dbReference type="GO" id="GO:0071005">
    <property type="term" value="C:U2-type precatalytic spliceosome"/>
    <property type="evidence" value="ECO:0000250"/>
    <property type="project" value="UniProtKB"/>
</dbReference>
<dbReference type="GO" id="GO:0003676">
    <property type="term" value="F:nucleic acid binding"/>
    <property type="evidence" value="ECO:0007669"/>
    <property type="project" value="InterPro"/>
</dbReference>
<dbReference type="GO" id="GO:0070064">
    <property type="term" value="F:proline-rich region binding"/>
    <property type="evidence" value="ECO:0007669"/>
    <property type="project" value="Ensembl"/>
</dbReference>
<dbReference type="GO" id="GO:0008270">
    <property type="term" value="F:zinc ion binding"/>
    <property type="evidence" value="ECO:0007669"/>
    <property type="project" value="UniProtKB-KW"/>
</dbReference>
<dbReference type="GO" id="GO:0045292">
    <property type="term" value="P:mRNA cis splicing, via spliceosome"/>
    <property type="evidence" value="ECO:0000250"/>
    <property type="project" value="UniProtKB"/>
</dbReference>
<dbReference type="GO" id="GO:0000398">
    <property type="term" value="P:mRNA splicing, via spliceosome"/>
    <property type="evidence" value="ECO:0000250"/>
    <property type="project" value="UniProtKB"/>
</dbReference>
<dbReference type="CDD" id="cd00201">
    <property type="entry name" value="WW"/>
    <property type="match status" value="2"/>
</dbReference>
<dbReference type="FunFam" id="3.30.160.60:FF:000767">
    <property type="entry name" value="WW domain-binding protein 4"/>
    <property type="match status" value="1"/>
</dbReference>
<dbReference type="Gene3D" id="2.20.70.10">
    <property type="match status" value="2"/>
</dbReference>
<dbReference type="Gene3D" id="3.30.160.60">
    <property type="entry name" value="Classic Zinc Finger"/>
    <property type="match status" value="1"/>
</dbReference>
<dbReference type="InterPro" id="IPR000690">
    <property type="entry name" value="Matrin/U1-C_Znf_C2H2"/>
</dbReference>
<dbReference type="InterPro" id="IPR003604">
    <property type="entry name" value="Matrin/U1-like-C_Znf_C2H2"/>
</dbReference>
<dbReference type="InterPro" id="IPR013085">
    <property type="entry name" value="U1-CZ_Znf_C2H2"/>
</dbReference>
<dbReference type="InterPro" id="IPR040023">
    <property type="entry name" value="WBP4"/>
</dbReference>
<dbReference type="InterPro" id="IPR001202">
    <property type="entry name" value="WW_dom"/>
</dbReference>
<dbReference type="InterPro" id="IPR036020">
    <property type="entry name" value="WW_dom_sf"/>
</dbReference>
<dbReference type="InterPro" id="IPR036236">
    <property type="entry name" value="Znf_C2H2_sf"/>
</dbReference>
<dbReference type="PANTHER" id="PTHR13173">
    <property type="entry name" value="WW DOMAIN BINDING PROTEIN 4"/>
    <property type="match status" value="1"/>
</dbReference>
<dbReference type="PANTHER" id="PTHR13173:SF10">
    <property type="entry name" value="WW DOMAIN-BINDING PROTEIN 4"/>
    <property type="match status" value="1"/>
</dbReference>
<dbReference type="Pfam" id="PF00397">
    <property type="entry name" value="WW"/>
    <property type="match status" value="2"/>
</dbReference>
<dbReference type="Pfam" id="PF06220">
    <property type="entry name" value="zf-U1"/>
    <property type="match status" value="1"/>
</dbReference>
<dbReference type="SMART" id="SM00456">
    <property type="entry name" value="WW"/>
    <property type="match status" value="2"/>
</dbReference>
<dbReference type="SMART" id="SM00451">
    <property type="entry name" value="ZnF_U1"/>
    <property type="match status" value="1"/>
</dbReference>
<dbReference type="SUPFAM" id="SSF57667">
    <property type="entry name" value="beta-beta-alpha zinc fingers"/>
    <property type="match status" value="1"/>
</dbReference>
<dbReference type="SUPFAM" id="SSF51045">
    <property type="entry name" value="WW domain"/>
    <property type="match status" value="2"/>
</dbReference>
<dbReference type="PROSITE" id="PS01159">
    <property type="entry name" value="WW_DOMAIN_1"/>
    <property type="match status" value="1"/>
</dbReference>
<dbReference type="PROSITE" id="PS50020">
    <property type="entry name" value="WW_DOMAIN_2"/>
    <property type="match status" value="2"/>
</dbReference>
<dbReference type="PROSITE" id="PS50171">
    <property type="entry name" value="ZF_MATRIN"/>
    <property type="match status" value="1"/>
</dbReference>
<keyword id="KW-0479">Metal-binding</keyword>
<keyword id="KW-0507">mRNA processing</keyword>
<keyword id="KW-0508">mRNA splicing</keyword>
<keyword id="KW-0539">Nucleus</keyword>
<keyword id="KW-0597">Phosphoprotein</keyword>
<keyword id="KW-1185">Reference proteome</keyword>
<keyword id="KW-0677">Repeat</keyword>
<keyword id="KW-0747">Spliceosome</keyword>
<keyword id="KW-0862">Zinc</keyword>
<keyword id="KW-0863">Zinc-finger</keyword>
<feature type="chain" id="PRO_0000076066" description="WW domain-binding protein 4">
    <location>
        <begin position="1"/>
        <end position="376"/>
    </location>
</feature>
<feature type="domain" description="WW 1" evidence="3">
    <location>
        <begin position="123"/>
        <end position="156"/>
    </location>
</feature>
<feature type="domain" description="WW 2" evidence="3">
    <location>
        <begin position="164"/>
        <end position="197"/>
    </location>
</feature>
<feature type="zinc finger region" description="Matrin-type" evidence="2">
    <location>
        <begin position="11"/>
        <end position="42"/>
    </location>
</feature>
<feature type="region of interest" description="Disordered" evidence="4">
    <location>
        <begin position="94"/>
        <end position="127"/>
    </location>
</feature>
<feature type="region of interest" description="Disordered" evidence="4">
    <location>
        <begin position="192"/>
        <end position="324"/>
    </location>
</feature>
<feature type="region of interest" description="Interaction with SNRNP200" evidence="1">
    <location>
        <begin position="357"/>
        <end position="375"/>
    </location>
</feature>
<feature type="compositionally biased region" description="Polar residues" evidence="4">
    <location>
        <begin position="94"/>
        <end position="111"/>
    </location>
</feature>
<feature type="compositionally biased region" description="Basic residues" evidence="4">
    <location>
        <begin position="114"/>
        <end position="123"/>
    </location>
</feature>
<feature type="compositionally biased region" description="Basic and acidic residues" evidence="4">
    <location>
        <begin position="219"/>
        <end position="272"/>
    </location>
</feature>
<feature type="modified residue" description="Phosphoserine" evidence="1">
    <location>
        <position position="228"/>
    </location>
</feature>
<feature type="modified residue" description="Phosphoserine" evidence="1">
    <location>
        <position position="230"/>
    </location>
</feature>
<feature type="sequence conflict" description="In Ref. 1; AAC34810." evidence="7" ref="1">
    <original>LKRL</original>
    <variation>SEKA</variation>
    <location>
        <begin position="80"/>
        <end position="83"/>
    </location>
</feature>
<feature type="sequence conflict" description="In Ref. 3; AAH34851." evidence="7" ref="3">
    <original>E</original>
    <variation>K</variation>
    <location>
        <position position="155"/>
    </location>
</feature>
<proteinExistence type="evidence at protein level"/>